<protein>
    <recommendedName>
        <fullName>Putative zinc metalloprotease TM_0890</fullName>
        <ecNumber>3.4.24.-</ecNumber>
    </recommendedName>
</protein>
<name>Y890_THEMA</name>
<gene>
    <name type="ordered locus">TM_0890</name>
</gene>
<reference key="1">
    <citation type="journal article" date="1999" name="Nature">
        <title>Evidence for lateral gene transfer between Archaea and Bacteria from genome sequence of Thermotoga maritima.</title>
        <authorList>
            <person name="Nelson K.E."/>
            <person name="Clayton R.A."/>
            <person name="Gill S.R."/>
            <person name="Gwinn M.L."/>
            <person name="Dodson R.J."/>
            <person name="Haft D.H."/>
            <person name="Hickey E.K."/>
            <person name="Peterson J.D."/>
            <person name="Nelson W.C."/>
            <person name="Ketchum K.A."/>
            <person name="McDonald L.A."/>
            <person name="Utterback T.R."/>
            <person name="Malek J.A."/>
            <person name="Linher K.D."/>
            <person name="Garrett M.M."/>
            <person name="Stewart A.M."/>
            <person name="Cotton M.D."/>
            <person name="Pratt M.S."/>
            <person name="Phillips C.A."/>
            <person name="Richardson D.L."/>
            <person name="Heidelberg J.F."/>
            <person name="Sutton G.G."/>
            <person name="Fleischmann R.D."/>
            <person name="Eisen J.A."/>
            <person name="White O."/>
            <person name="Salzberg S.L."/>
            <person name="Smith H.O."/>
            <person name="Venter J.C."/>
            <person name="Fraser C.M."/>
        </authorList>
    </citation>
    <scope>NUCLEOTIDE SEQUENCE [LARGE SCALE GENOMIC DNA]</scope>
    <source>
        <strain>ATCC 43589 / DSM 3109 / JCM 10099 / NBRC 100826 / MSB8</strain>
    </source>
</reference>
<organism>
    <name type="scientific">Thermotoga maritima (strain ATCC 43589 / DSM 3109 / JCM 10099 / NBRC 100826 / MSB8)</name>
    <dbReference type="NCBI Taxonomy" id="243274"/>
    <lineage>
        <taxon>Bacteria</taxon>
        <taxon>Thermotogati</taxon>
        <taxon>Thermotogota</taxon>
        <taxon>Thermotogae</taxon>
        <taxon>Thermotogales</taxon>
        <taxon>Thermotogaceae</taxon>
        <taxon>Thermotoga</taxon>
    </lineage>
</organism>
<feature type="chain" id="PRO_0000088473" description="Putative zinc metalloprotease TM_0890">
    <location>
        <begin position="1"/>
        <end position="501"/>
    </location>
</feature>
<feature type="transmembrane region" description="Helical" evidence="2">
    <location>
        <begin position="93"/>
        <end position="115"/>
    </location>
</feature>
<feature type="transmembrane region" description="Helical" evidence="2">
    <location>
        <begin position="401"/>
        <end position="420"/>
    </location>
</feature>
<feature type="transmembrane region" description="Helical" evidence="2">
    <location>
        <begin position="427"/>
        <end position="449"/>
    </location>
</feature>
<feature type="transmembrane region" description="Helical" evidence="2">
    <location>
        <begin position="474"/>
        <end position="496"/>
    </location>
</feature>
<feature type="domain" description="PDZ" evidence="3">
    <location>
        <begin position="96"/>
        <end position="180"/>
    </location>
</feature>
<feature type="active site" evidence="4">
    <location>
        <position position="18"/>
    </location>
</feature>
<feature type="binding site" evidence="4">
    <location>
        <position position="17"/>
    </location>
    <ligand>
        <name>Zn(2+)</name>
        <dbReference type="ChEBI" id="CHEBI:29105"/>
        <note>catalytic</note>
    </ligand>
</feature>
<feature type="binding site" evidence="4">
    <location>
        <position position="21"/>
    </location>
    <ligand>
        <name>Zn(2+)</name>
        <dbReference type="ChEBI" id="CHEBI:29105"/>
        <note>catalytic</note>
    </ligand>
</feature>
<dbReference type="EC" id="3.4.24.-"/>
<dbReference type="EMBL" id="AE000512">
    <property type="protein sequence ID" value="AAD35971.1"/>
    <property type="molecule type" value="Genomic_DNA"/>
</dbReference>
<dbReference type="PIR" id="C72321">
    <property type="entry name" value="C72321"/>
</dbReference>
<dbReference type="RefSeq" id="NP_228698.1">
    <property type="nucleotide sequence ID" value="NC_000853.1"/>
</dbReference>
<dbReference type="RefSeq" id="WP_004080697.1">
    <property type="nucleotide sequence ID" value="NZ_CP011107.1"/>
</dbReference>
<dbReference type="SMR" id="Q9WZZ2"/>
<dbReference type="FunCoup" id="Q9WZZ2">
    <property type="interactions" value="373"/>
</dbReference>
<dbReference type="STRING" id="243274.TM_0890"/>
<dbReference type="PaxDb" id="243274-THEMA_00185"/>
<dbReference type="EnsemblBacteria" id="AAD35971">
    <property type="protein sequence ID" value="AAD35971"/>
    <property type="gene ID" value="TM_0890"/>
</dbReference>
<dbReference type="KEGG" id="tma:TM0890"/>
<dbReference type="KEGG" id="tmi:THEMA_00185"/>
<dbReference type="KEGG" id="tmm:Tmari_0892"/>
<dbReference type="KEGG" id="tmw:THMA_0912"/>
<dbReference type="eggNOG" id="COG0750">
    <property type="taxonomic scope" value="Bacteria"/>
</dbReference>
<dbReference type="InParanoid" id="Q9WZZ2"/>
<dbReference type="OrthoDB" id="9782003at2"/>
<dbReference type="Proteomes" id="UP000008183">
    <property type="component" value="Chromosome"/>
</dbReference>
<dbReference type="GO" id="GO:0005886">
    <property type="term" value="C:plasma membrane"/>
    <property type="evidence" value="ECO:0007669"/>
    <property type="project" value="UniProtKB-SubCell"/>
</dbReference>
<dbReference type="GO" id="GO:0046872">
    <property type="term" value="F:metal ion binding"/>
    <property type="evidence" value="ECO:0007669"/>
    <property type="project" value="UniProtKB-KW"/>
</dbReference>
<dbReference type="GO" id="GO:0004222">
    <property type="term" value="F:metalloendopeptidase activity"/>
    <property type="evidence" value="ECO:0007669"/>
    <property type="project" value="InterPro"/>
</dbReference>
<dbReference type="GO" id="GO:0006508">
    <property type="term" value="P:proteolysis"/>
    <property type="evidence" value="ECO:0007669"/>
    <property type="project" value="UniProtKB-KW"/>
</dbReference>
<dbReference type="CDD" id="cd23081">
    <property type="entry name" value="cpPDZ_EcRseP-like"/>
    <property type="match status" value="1"/>
</dbReference>
<dbReference type="CDD" id="cd06163">
    <property type="entry name" value="S2P-M50_PDZ_RseP-like"/>
    <property type="match status" value="1"/>
</dbReference>
<dbReference type="Gene3D" id="2.30.42.10">
    <property type="match status" value="1"/>
</dbReference>
<dbReference type="InterPro" id="IPR001478">
    <property type="entry name" value="PDZ"/>
</dbReference>
<dbReference type="InterPro" id="IPR041489">
    <property type="entry name" value="PDZ_6"/>
</dbReference>
<dbReference type="InterPro" id="IPR036034">
    <property type="entry name" value="PDZ_sf"/>
</dbReference>
<dbReference type="InterPro" id="IPR004387">
    <property type="entry name" value="Pept_M50_Zn"/>
</dbReference>
<dbReference type="InterPro" id="IPR008915">
    <property type="entry name" value="Peptidase_M50"/>
</dbReference>
<dbReference type="PANTHER" id="PTHR42837:SF2">
    <property type="entry name" value="MEMBRANE METALLOPROTEASE ARASP2, CHLOROPLASTIC-RELATED"/>
    <property type="match status" value="1"/>
</dbReference>
<dbReference type="PANTHER" id="PTHR42837">
    <property type="entry name" value="REGULATOR OF SIGMA-E PROTEASE RSEP"/>
    <property type="match status" value="1"/>
</dbReference>
<dbReference type="Pfam" id="PF17820">
    <property type="entry name" value="PDZ_6"/>
    <property type="match status" value="1"/>
</dbReference>
<dbReference type="Pfam" id="PF02163">
    <property type="entry name" value="Peptidase_M50"/>
    <property type="match status" value="1"/>
</dbReference>
<dbReference type="SMART" id="SM00228">
    <property type="entry name" value="PDZ"/>
    <property type="match status" value="2"/>
</dbReference>
<dbReference type="SUPFAM" id="SSF50156">
    <property type="entry name" value="PDZ domain-like"/>
    <property type="match status" value="1"/>
</dbReference>
<dbReference type="PROSITE" id="PS50106">
    <property type="entry name" value="PDZ"/>
    <property type="match status" value="1"/>
</dbReference>
<dbReference type="PROSITE" id="PS00142">
    <property type="entry name" value="ZINC_PROTEASE"/>
    <property type="match status" value="1"/>
</dbReference>
<proteinExistence type="inferred from homology"/>
<evidence type="ECO:0000250" key="1"/>
<evidence type="ECO:0000255" key="2"/>
<evidence type="ECO:0000255" key="3">
    <source>
        <dbReference type="PROSITE-ProRule" id="PRU00143"/>
    </source>
</evidence>
<evidence type="ECO:0000255" key="4">
    <source>
        <dbReference type="PROSITE-ProRule" id="PRU10095"/>
    </source>
</evidence>
<evidence type="ECO:0000305" key="5"/>
<comment type="cofactor">
    <cofactor evidence="5">
        <name>Zn(2+)</name>
        <dbReference type="ChEBI" id="CHEBI:29105"/>
    </cofactor>
</comment>
<comment type="subcellular location">
    <subcellularLocation>
        <location evidence="1">Cell inner membrane</location>
        <topology evidence="1">Multi-pass membrane protein</topology>
    </subcellularLocation>
</comment>
<comment type="similarity">
    <text evidence="5">Belongs to the peptidase M50B family.</text>
</comment>
<keyword id="KW-0997">Cell inner membrane</keyword>
<keyword id="KW-1003">Cell membrane</keyword>
<keyword id="KW-0378">Hydrolase</keyword>
<keyword id="KW-0472">Membrane</keyword>
<keyword id="KW-0479">Metal-binding</keyword>
<keyword id="KW-0482">Metalloprotease</keyword>
<keyword id="KW-0645">Protease</keyword>
<keyword id="KW-1185">Reference proteome</keyword>
<keyword id="KW-0812">Transmembrane</keyword>
<keyword id="KW-1133">Transmembrane helix</keyword>
<keyword id="KW-0862">Zinc</keyword>
<sequence>MVIVYFILILTGVIMVHELGHYLFARLFKVKVLEFAIGFGPKIFSVKGRETTFRLNVFPIGGYVRMLGEEGEEIADEEEKEKSFYAKPAWQRFLITLAGPLFSILAGYLLFLPITLNWGIALPGIDEVVPGSPAEEAGLRRGDIIYSINDKIAFDTSIISNEIQKGLPVELVIIRNGEKKSLRLTPRMYPETYEFVLESAEGTPSGKLVSVNGNRDTSVLKEFVNEYVVLEFEGGTVKGILKQFNEIPARYMIGISFSGLAPVFKKDIYFKEGLFVFKKGDRIVRVEDQEIEGWQDLVVLYQRLTLGKDTMIVSLQGENIEWWRGLSGSVRVVIKRGDSTIEKNVEASFLKNILETPDLLEMGVPRYKPKNPLEAVNLSVKACNYVLLTTASSLKNFFRNVQTGQIVGVVGLAGVISAASKTGLEAVLTVVAVITISLGVLNLLPLPALDGGRIIFSLVEMITRKKLNPQVENIIHFLGFIFLMILFLYITFLDIGRMMGI</sequence>
<accession>Q9WZZ2</accession>